<proteinExistence type="inferred from homology"/>
<evidence type="ECO:0000255" key="1">
    <source>
        <dbReference type="HAMAP-Rule" id="MF_00318"/>
    </source>
</evidence>
<organism>
    <name type="scientific">Buchnera aphidicola subsp. Schizaphis graminum (strain Sg)</name>
    <dbReference type="NCBI Taxonomy" id="198804"/>
    <lineage>
        <taxon>Bacteria</taxon>
        <taxon>Pseudomonadati</taxon>
        <taxon>Pseudomonadota</taxon>
        <taxon>Gammaproteobacteria</taxon>
        <taxon>Enterobacterales</taxon>
        <taxon>Erwiniaceae</taxon>
        <taxon>Buchnera</taxon>
    </lineage>
</organism>
<accession>Q8K9E0</accession>
<name>ENO_BUCAP</name>
<keyword id="KW-0963">Cytoplasm</keyword>
<keyword id="KW-0324">Glycolysis</keyword>
<keyword id="KW-0456">Lyase</keyword>
<keyword id="KW-0460">Magnesium</keyword>
<keyword id="KW-0479">Metal-binding</keyword>
<keyword id="KW-0964">Secreted</keyword>
<protein>
    <recommendedName>
        <fullName evidence="1">Enolase</fullName>
        <ecNumber evidence="1">4.2.1.11</ecNumber>
    </recommendedName>
    <alternativeName>
        <fullName evidence="1">2-phospho-D-glycerate hydro-lyase</fullName>
    </alternativeName>
    <alternativeName>
        <fullName evidence="1">2-phosphoglycerate dehydratase</fullName>
    </alternativeName>
</protein>
<sequence>MSKILKIIGREIIDSRGNPTIECEVLLEGGFVGLASVPSGASTGSFETWELRDQDKNRFMGKGVQKAVEIINNKIFYSLKNKNAIDQFDIDQTMINLDGTENKSNLGSNSILSVSLATAKAAASSKGMPLYQHIAEINNTPGVFSMPLPMINIINGGKHANNNIDIQEFMIQPISAKSITEAIRIGAEIFHSLGNLLKDKGMSTTVGDEGGYAPNFKSNEEALNVIQDAVHKTKYKLGKDITLAIDCAASELYNKTRKKYQFIGEGTEFSSQELTHYLKKLSNKYPIISIEDGQDESDWEGFLYQTKELGNSLQLVGDDLFVTNKNILKKGIKKGVANAILIKLNQIGTLTETIETIKIAKKFNYGVIISHRSGETEDTSIADLSVGTASGQIKTGSMSRSDRTSKYNQLIRIEEILNKKRAPFYGLKEVKSSF</sequence>
<reference key="1">
    <citation type="journal article" date="2002" name="Science">
        <title>50 million years of genomic stasis in endosymbiotic bacteria.</title>
        <authorList>
            <person name="Tamas I."/>
            <person name="Klasson L."/>
            <person name="Canbaeck B."/>
            <person name="Naeslund A.K."/>
            <person name="Eriksson A.-S."/>
            <person name="Wernegreen J.J."/>
            <person name="Sandstroem J.P."/>
            <person name="Moran N.A."/>
            <person name="Andersson S.G.E."/>
        </authorList>
    </citation>
    <scope>NUCLEOTIDE SEQUENCE [LARGE SCALE GENOMIC DNA]</scope>
    <source>
        <strain>Sg</strain>
    </source>
</reference>
<comment type="function">
    <text evidence="1">Catalyzes the reversible conversion of 2-phosphoglycerate (2-PG) into phosphoenolpyruvate (PEP). It is essential for the degradation of carbohydrates via glycolysis.</text>
</comment>
<comment type="catalytic activity">
    <reaction evidence="1">
        <text>(2R)-2-phosphoglycerate = phosphoenolpyruvate + H2O</text>
        <dbReference type="Rhea" id="RHEA:10164"/>
        <dbReference type="ChEBI" id="CHEBI:15377"/>
        <dbReference type="ChEBI" id="CHEBI:58289"/>
        <dbReference type="ChEBI" id="CHEBI:58702"/>
        <dbReference type="EC" id="4.2.1.11"/>
    </reaction>
</comment>
<comment type="cofactor">
    <cofactor evidence="1">
        <name>Mg(2+)</name>
        <dbReference type="ChEBI" id="CHEBI:18420"/>
    </cofactor>
    <text evidence="1">Binds a second Mg(2+) ion via substrate during catalysis.</text>
</comment>
<comment type="pathway">
    <text evidence="1">Carbohydrate degradation; glycolysis; pyruvate from D-glyceraldehyde 3-phosphate: step 4/5.</text>
</comment>
<comment type="subunit">
    <text evidence="1">Component of the RNA degradosome, a multiprotein complex involved in RNA processing and mRNA degradation.</text>
</comment>
<comment type="subcellular location">
    <subcellularLocation>
        <location evidence="1">Cytoplasm</location>
    </subcellularLocation>
    <subcellularLocation>
        <location evidence="1">Secreted</location>
    </subcellularLocation>
    <subcellularLocation>
        <location evidence="1">Cell surface</location>
    </subcellularLocation>
    <text evidence="1">Fractions of enolase are present in both the cytoplasm and on the cell surface.</text>
</comment>
<comment type="similarity">
    <text evidence="1">Belongs to the enolase family.</text>
</comment>
<feature type="chain" id="PRO_0000133856" description="Enolase">
    <location>
        <begin position="1"/>
        <end position="434"/>
    </location>
</feature>
<feature type="active site" description="Proton donor" evidence="1">
    <location>
        <position position="209"/>
    </location>
</feature>
<feature type="active site" description="Proton acceptor" evidence="1">
    <location>
        <position position="343"/>
    </location>
</feature>
<feature type="binding site" evidence="1">
    <location>
        <position position="167"/>
    </location>
    <ligand>
        <name>(2R)-2-phosphoglycerate</name>
        <dbReference type="ChEBI" id="CHEBI:58289"/>
    </ligand>
</feature>
<feature type="binding site" evidence="1">
    <location>
        <position position="246"/>
    </location>
    <ligand>
        <name>Mg(2+)</name>
        <dbReference type="ChEBI" id="CHEBI:18420"/>
    </ligand>
</feature>
<feature type="binding site" evidence="1">
    <location>
        <position position="291"/>
    </location>
    <ligand>
        <name>Mg(2+)</name>
        <dbReference type="ChEBI" id="CHEBI:18420"/>
    </ligand>
</feature>
<feature type="binding site" evidence="1">
    <location>
        <position position="318"/>
    </location>
    <ligand>
        <name>Mg(2+)</name>
        <dbReference type="ChEBI" id="CHEBI:18420"/>
    </ligand>
</feature>
<feature type="binding site" evidence="1">
    <location>
        <position position="343"/>
    </location>
    <ligand>
        <name>(2R)-2-phosphoglycerate</name>
        <dbReference type="ChEBI" id="CHEBI:58289"/>
    </ligand>
</feature>
<feature type="binding site" evidence="1">
    <location>
        <position position="372"/>
    </location>
    <ligand>
        <name>(2R)-2-phosphoglycerate</name>
        <dbReference type="ChEBI" id="CHEBI:58289"/>
    </ligand>
</feature>
<feature type="binding site" evidence="1">
    <location>
        <position position="373"/>
    </location>
    <ligand>
        <name>(2R)-2-phosphoglycerate</name>
        <dbReference type="ChEBI" id="CHEBI:58289"/>
    </ligand>
</feature>
<feature type="binding site" evidence="1">
    <location>
        <position position="394"/>
    </location>
    <ligand>
        <name>(2R)-2-phosphoglycerate</name>
        <dbReference type="ChEBI" id="CHEBI:58289"/>
    </ligand>
</feature>
<dbReference type="EC" id="4.2.1.11" evidence="1"/>
<dbReference type="EMBL" id="AE013218">
    <property type="protein sequence ID" value="AAM67951.1"/>
    <property type="molecule type" value="Genomic_DNA"/>
</dbReference>
<dbReference type="RefSeq" id="WP_011053918.1">
    <property type="nucleotide sequence ID" value="NC_004061.1"/>
</dbReference>
<dbReference type="SMR" id="Q8K9E0"/>
<dbReference type="STRING" id="198804.BUsg_400"/>
<dbReference type="GeneID" id="93003874"/>
<dbReference type="KEGG" id="bas:BUsg_400"/>
<dbReference type="eggNOG" id="COG0148">
    <property type="taxonomic scope" value="Bacteria"/>
</dbReference>
<dbReference type="HOGENOM" id="CLU_031223_2_1_6"/>
<dbReference type="UniPathway" id="UPA00109">
    <property type="reaction ID" value="UER00187"/>
</dbReference>
<dbReference type="Proteomes" id="UP000000416">
    <property type="component" value="Chromosome"/>
</dbReference>
<dbReference type="GO" id="GO:0009986">
    <property type="term" value="C:cell surface"/>
    <property type="evidence" value="ECO:0007669"/>
    <property type="project" value="UniProtKB-SubCell"/>
</dbReference>
<dbReference type="GO" id="GO:0005576">
    <property type="term" value="C:extracellular region"/>
    <property type="evidence" value="ECO:0007669"/>
    <property type="project" value="UniProtKB-SubCell"/>
</dbReference>
<dbReference type="GO" id="GO:0000015">
    <property type="term" value="C:phosphopyruvate hydratase complex"/>
    <property type="evidence" value="ECO:0007669"/>
    <property type="project" value="InterPro"/>
</dbReference>
<dbReference type="GO" id="GO:0000287">
    <property type="term" value="F:magnesium ion binding"/>
    <property type="evidence" value="ECO:0007669"/>
    <property type="project" value="UniProtKB-UniRule"/>
</dbReference>
<dbReference type="GO" id="GO:0004634">
    <property type="term" value="F:phosphopyruvate hydratase activity"/>
    <property type="evidence" value="ECO:0007669"/>
    <property type="project" value="UniProtKB-UniRule"/>
</dbReference>
<dbReference type="GO" id="GO:0006096">
    <property type="term" value="P:glycolytic process"/>
    <property type="evidence" value="ECO:0007669"/>
    <property type="project" value="UniProtKB-UniRule"/>
</dbReference>
<dbReference type="CDD" id="cd03313">
    <property type="entry name" value="enolase"/>
    <property type="match status" value="1"/>
</dbReference>
<dbReference type="FunFam" id="3.30.390.10:FF:000001">
    <property type="entry name" value="Enolase"/>
    <property type="match status" value="1"/>
</dbReference>
<dbReference type="Gene3D" id="3.20.20.120">
    <property type="entry name" value="Enolase-like C-terminal domain"/>
    <property type="match status" value="1"/>
</dbReference>
<dbReference type="Gene3D" id="3.30.390.10">
    <property type="entry name" value="Enolase-like, N-terminal domain"/>
    <property type="match status" value="1"/>
</dbReference>
<dbReference type="HAMAP" id="MF_00318">
    <property type="entry name" value="Enolase"/>
    <property type="match status" value="1"/>
</dbReference>
<dbReference type="InterPro" id="IPR000941">
    <property type="entry name" value="Enolase"/>
</dbReference>
<dbReference type="InterPro" id="IPR036849">
    <property type="entry name" value="Enolase-like_C_sf"/>
</dbReference>
<dbReference type="InterPro" id="IPR029017">
    <property type="entry name" value="Enolase-like_N"/>
</dbReference>
<dbReference type="InterPro" id="IPR020810">
    <property type="entry name" value="Enolase_C"/>
</dbReference>
<dbReference type="InterPro" id="IPR020809">
    <property type="entry name" value="Enolase_CS"/>
</dbReference>
<dbReference type="InterPro" id="IPR020811">
    <property type="entry name" value="Enolase_N"/>
</dbReference>
<dbReference type="NCBIfam" id="TIGR01060">
    <property type="entry name" value="eno"/>
    <property type="match status" value="1"/>
</dbReference>
<dbReference type="PANTHER" id="PTHR11902">
    <property type="entry name" value="ENOLASE"/>
    <property type="match status" value="1"/>
</dbReference>
<dbReference type="PANTHER" id="PTHR11902:SF1">
    <property type="entry name" value="ENOLASE"/>
    <property type="match status" value="1"/>
</dbReference>
<dbReference type="Pfam" id="PF00113">
    <property type="entry name" value="Enolase_C"/>
    <property type="match status" value="1"/>
</dbReference>
<dbReference type="Pfam" id="PF03952">
    <property type="entry name" value="Enolase_N"/>
    <property type="match status" value="1"/>
</dbReference>
<dbReference type="PIRSF" id="PIRSF001400">
    <property type="entry name" value="Enolase"/>
    <property type="match status" value="1"/>
</dbReference>
<dbReference type="PRINTS" id="PR00148">
    <property type="entry name" value="ENOLASE"/>
</dbReference>
<dbReference type="SFLD" id="SFLDS00001">
    <property type="entry name" value="Enolase"/>
    <property type="match status" value="1"/>
</dbReference>
<dbReference type="SFLD" id="SFLDF00002">
    <property type="entry name" value="enolase"/>
    <property type="match status" value="1"/>
</dbReference>
<dbReference type="SMART" id="SM01192">
    <property type="entry name" value="Enolase_C"/>
    <property type="match status" value="1"/>
</dbReference>
<dbReference type="SMART" id="SM01193">
    <property type="entry name" value="Enolase_N"/>
    <property type="match status" value="1"/>
</dbReference>
<dbReference type="SUPFAM" id="SSF51604">
    <property type="entry name" value="Enolase C-terminal domain-like"/>
    <property type="match status" value="1"/>
</dbReference>
<dbReference type="SUPFAM" id="SSF54826">
    <property type="entry name" value="Enolase N-terminal domain-like"/>
    <property type="match status" value="1"/>
</dbReference>
<dbReference type="PROSITE" id="PS00164">
    <property type="entry name" value="ENOLASE"/>
    <property type="match status" value="1"/>
</dbReference>
<gene>
    <name evidence="1" type="primary">eno</name>
    <name type="ordered locus">BUsg_400</name>
</gene>